<reference key="1">
    <citation type="journal article" date="2004" name="Proc. Natl. Acad. Sci. U.S.A.">
        <title>The diploid genome sequence of Candida albicans.</title>
        <authorList>
            <person name="Jones T."/>
            <person name="Federspiel N.A."/>
            <person name="Chibana H."/>
            <person name="Dungan J."/>
            <person name="Kalman S."/>
            <person name="Magee B.B."/>
            <person name="Newport G."/>
            <person name="Thorstenson Y.R."/>
            <person name="Agabian N."/>
            <person name="Magee P.T."/>
            <person name="Davis R.W."/>
            <person name="Scherer S."/>
        </authorList>
    </citation>
    <scope>NUCLEOTIDE SEQUENCE [LARGE SCALE GENOMIC DNA]</scope>
    <source>
        <strain>SC5314 / ATCC MYA-2876</strain>
    </source>
</reference>
<reference key="2">
    <citation type="journal article" date="2007" name="Genome Biol.">
        <title>Assembly of the Candida albicans genome into sixteen supercontigs aligned on the eight chromosomes.</title>
        <authorList>
            <person name="van het Hoog M."/>
            <person name="Rast T.J."/>
            <person name="Martchenko M."/>
            <person name="Grindle S."/>
            <person name="Dignard D."/>
            <person name="Hogues H."/>
            <person name="Cuomo C."/>
            <person name="Berriman M."/>
            <person name="Scherer S."/>
            <person name="Magee B.B."/>
            <person name="Whiteway M."/>
            <person name="Chibana H."/>
            <person name="Nantel A."/>
            <person name="Magee P.T."/>
        </authorList>
    </citation>
    <scope>GENOME REANNOTATION</scope>
    <source>
        <strain>SC5314 / ATCC MYA-2876</strain>
    </source>
</reference>
<reference key="3">
    <citation type="journal article" date="2013" name="Genome Biol.">
        <title>Assembly of a phased diploid Candida albicans genome facilitates allele-specific measurements and provides a simple model for repeat and indel structure.</title>
        <authorList>
            <person name="Muzzey D."/>
            <person name="Schwartz K."/>
            <person name="Weissman J.S."/>
            <person name="Sherlock G."/>
        </authorList>
    </citation>
    <scope>NUCLEOTIDE SEQUENCE [LARGE SCALE GENOMIC DNA]</scope>
    <scope>GENOME REANNOTATION</scope>
    <source>
        <strain>SC5314 / ATCC MYA-2876</strain>
    </source>
</reference>
<reference key="4">
    <citation type="journal article" date="2010" name="PLoS Biol.">
        <title>Evolutionary tinkering with conserved components of a transcriptional regulatory network.</title>
        <authorList>
            <person name="Lavoie H."/>
            <person name="Hogues H."/>
            <person name="Mallick J."/>
            <person name="Sellam A."/>
            <person name="Nantel A."/>
            <person name="Whiteway M."/>
        </authorList>
    </citation>
    <scope>FUNCTION</scope>
</reference>
<reference key="5">
    <citation type="journal article" date="2012" name="Cell">
        <title>A recently evolved transcriptional network controls biofilm development in Candida albicans.</title>
        <authorList>
            <person name="Nobile C.J."/>
            <person name="Fox E.P."/>
            <person name="Nett J.E."/>
            <person name="Sorrells T.R."/>
            <person name="Mitrovich Q.M."/>
            <person name="Hernday A.D."/>
            <person name="Tuch B.B."/>
            <person name="Andes D.R."/>
            <person name="Johnson A.D."/>
        </authorList>
    </citation>
    <scope>INDUCTION</scope>
</reference>
<reference key="6">
    <citation type="journal article" date="2013" name="J. Biol. Chem.">
        <title>The evolutionary rewiring of the ribosomal protein transcription pathway modifies the interaction of transcription factor heteromer Ifh1-Fhl1 (interacts with forkhead 1-forkhead-like 1) with the DNA-binding specificity element.</title>
        <authorList>
            <person name="Mallick J."/>
            <person name="Whiteway M."/>
        </authorList>
    </citation>
    <scope>FUNCTION</scope>
    <scope>INTERACTION WITH FLH1 AND TBF1</scope>
</reference>
<keyword id="KW-0539">Nucleus</keyword>
<keyword id="KW-1185">Reference proteome</keyword>
<keyword id="KW-0804">Transcription</keyword>
<keyword id="KW-0805">Transcription regulation</keyword>
<organism>
    <name type="scientific">Candida albicans (strain SC5314 / ATCC MYA-2876)</name>
    <name type="common">Yeast</name>
    <dbReference type="NCBI Taxonomy" id="237561"/>
    <lineage>
        <taxon>Eukaryota</taxon>
        <taxon>Fungi</taxon>
        <taxon>Dikarya</taxon>
        <taxon>Ascomycota</taxon>
        <taxon>Saccharomycotina</taxon>
        <taxon>Pichiomycetes</taxon>
        <taxon>Debaryomycetaceae</taxon>
        <taxon>Candida/Lodderomyces clade</taxon>
        <taxon>Candida</taxon>
    </lineage>
</organism>
<gene>
    <name type="primary">IFH1</name>
    <name type="ordered locus">CAALFM_C502650CA</name>
    <name type="ORF">CaO19.11758</name>
    <name type="ORF">CaO19.4282</name>
</gene>
<proteinExistence type="evidence at protein level"/>
<comment type="function">
    <text evidence="2 4">Transcriptional coactivator that together with FHL1 regulates the expression of rRNA and ribosomal protein genes (PubMed:20231876, PubMed:23625919). The FHL1-IFH1 complex is targeted to the ribosomal protein genes by the DNA-binding factor TBF1 (PubMed:23625919).</text>
</comment>
<comment type="subunit">
    <text evidence="4">Interacts with FLH1 and TBF1.</text>
</comment>
<comment type="subcellular location">
    <subcellularLocation>
        <location evidence="5">Nucleus</location>
    </subcellularLocation>
</comment>
<comment type="induction">
    <text evidence="3">Induced during biofilm formation.</text>
</comment>
<comment type="similarity">
    <text evidence="5">Belongs to the IFH1 family.</text>
</comment>
<dbReference type="EMBL" id="CP017627">
    <property type="protein sequence ID" value="AOW29690.1"/>
    <property type="molecule type" value="Genomic_DNA"/>
</dbReference>
<dbReference type="RefSeq" id="XP_720590.2">
    <property type="nucleotide sequence ID" value="XM_715497.2"/>
</dbReference>
<dbReference type="STRING" id="237561.Q5AG97"/>
<dbReference type="EnsemblFungi" id="C5_02650C_A-T">
    <property type="protein sequence ID" value="C5_02650C_A-T-p1"/>
    <property type="gene ID" value="C5_02650C_A"/>
</dbReference>
<dbReference type="GeneID" id="3637770"/>
<dbReference type="KEGG" id="cal:CAALFM_C502650CA"/>
<dbReference type="CGD" id="CAL0000182191">
    <property type="gene designation" value="IFH1"/>
</dbReference>
<dbReference type="VEuPathDB" id="FungiDB:C5_02650C_A"/>
<dbReference type="eggNOG" id="ENOG502QQB6">
    <property type="taxonomic scope" value="Eukaryota"/>
</dbReference>
<dbReference type="HOGENOM" id="CLU_910745_0_0_1"/>
<dbReference type="InParanoid" id="Q5AG97"/>
<dbReference type="OrthoDB" id="4047468at2759"/>
<dbReference type="PRO" id="PR:Q5AG97"/>
<dbReference type="Proteomes" id="UP000000559">
    <property type="component" value="Chromosome 5"/>
</dbReference>
<dbReference type="GO" id="GO:0005634">
    <property type="term" value="C:nucleus"/>
    <property type="evidence" value="ECO:0007669"/>
    <property type="project" value="UniProtKB-SubCell"/>
</dbReference>
<dbReference type="GO" id="GO:0000976">
    <property type="term" value="F:transcription cis-regulatory region binding"/>
    <property type="evidence" value="ECO:0000314"/>
    <property type="project" value="CGD"/>
</dbReference>
<dbReference type="GO" id="GO:0003712">
    <property type="term" value="F:transcription coregulator activity"/>
    <property type="evidence" value="ECO:0000318"/>
    <property type="project" value="GO_Central"/>
</dbReference>
<dbReference type="GO" id="GO:0045944">
    <property type="term" value="P:positive regulation of transcription by RNA polymerase II"/>
    <property type="evidence" value="ECO:0000315"/>
    <property type="project" value="CGD"/>
</dbReference>
<dbReference type="GO" id="GO:0060962">
    <property type="term" value="P:regulation of ribosomal protein gene transcription by RNA polymerase II"/>
    <property type="evidence" value="ECO:0007669"/>
    <property type="project" value="InterPro"/>
</dbReference>
<dbReference type="GO" id="GO:0006357">
    <property type="term" value="P:regulation of transcription by RNA polymerase II"/>
    <property type="evidence" value="ECO:0000318"/>
    <property type="project" value="GO_Central"/>
</dbReference>
<dbReference type="GO" id="GO:0009303">
    <property type="term" value="P:rRNA transcription"/>
    <property type="evidence" value="ECO:0000315"/>
    <property type="project" value="CGD"/>
</dbReference>
<dbReference type="InterPro" id="IPR018837">
    <property type="entry name" value="TF_CRF1/IFH1"/>
</dbReference>
<dbReference type="PANTHER" id="PTHR28057">
    <property type="entry name" value="PROTEIN IFH1-RELATED"/>
    <property type="match status" value="1"/>
</dbReference>
<dbReference type="PANTHER" id="PTHR28057:SF1">
    <property type="entry name" value="PROTEIN IFH1-RELATED"/>
    <property type="match status" value="1"/>
</dbReference>
<dbReference type="Pfam" id="PF10380">
    <property type="entry name" value="CRF1"/>
    <property type="match status" value="1"/>
</dbReference>
<evidence type="ECO:0000256" key="1">
    <source>
        <dbReference type="SAM" id="MobiDB-lite"/>
    </source>
</evidence>
<evidence type="ECO:0000269" key="2">
    <source>
    </source>
</evidence>
<evidence type="ECO:0000269" key="3">
    <source>
    </source>
</evidence>
<evidence type="ECO:0000269" key="4">
    <source>
    </source>
</evidence>
<evidence type="ECO:0000305" key="5"/>
<protein>
    <recommendedName>
        <fullName>Transcriptional regulator IFH1</fullName>
    </recommendedName>
</protein>
<accession>Q5AG97</accession>
<accession>A0A1D8PNH2</accession>
<accession>Q5AGN3</accession>
<feature type="chain" id="PRO_0000426085" description="Transcriptional regulator IFH1">
    <location>
        <begin position="1"/>
        <end position="885"/>
    </location>
</feature>
<feature type="region of interest" description="Disordered" evidence="1">
    <location>
        <begin position="1"/>
        <end position="138"/>
    </location>
</feature>
<feature type="region of interest" description="Disordered" evidence="1">
    <location>
        <begin position="150"/>
        <end position="201"/>
    </location>
</feature>
<feature type="region of interest" description="Disordered" evidence="1">
    <location>
        <begin position="234"/>
        <end position="275"/>
    </location>
</feature>
<feature type="region of interest" description="Disordered" evidence="1">
    <location>
        <begin position="291"/>
        <end position="410"/>
    </location>
</feature>
<feature type="region of interest" description="Disordered" evidence="1">
    <location>
        <begin position="465"/>
        <end position="639"/>
    </location>
</feature>
<feature type="region of interest" description="Disordered" evidence="1">
    <location>
        <begin position="680"/>
        <end position="708"/>
    </location>
</feature>
<feature type="region of interest" description="Disordered" evidence="1">
    <location>
        <begin position="813"/>
        <end position="835"/>
    </location>
</feature>
<feature type="compositionally biased region" description="Polar residues" evidence="1">
    <location>
        <begin position="1"/>
        <end position="22"/>
    </location>
</feature>
<feature type="compositionally biased region" description="Basic residues" evidence="1">
    <location>
        <begin position="26"/>
        <end position="40"/>
    </location>
</feature>
<feature type="compositionally biased region" description="Acidic residues" evidence="1">
    <location>
        <begin position="55"/>
        <end position="78"/>
    </location>
</feature>
<feature type="compositionally biased region" description="Acidic residues" evidence="1">
    <location>
        <begin position="102"/>
        <end position="112"/>
    </location>
</feature>
<feature type="compositionally biased region" description="Polar residues" evidence="1">
    <location>
        <begin position="115"/>
        <end position="124"/>
    </location>
</feature>
<feature type="compositionally biased region" description="Acidic residues" evidence="1">
    <location>
        <begin position="125"/>
        <end position="138"/>
    </location>
</feature>
<feature type="compositionally biased region" description="Basic residues" evidence="1">
    <location>
        <begin position="153"/>
        <end position="167"/>
    </location>
</feature>
<feature type="compositionally biased region" description="Low complexity" evidence="1">
    <location>
        <begin position="173"/>
        <end position="184"/>
    </location>
</feature>
<feature type="compositionally biased region" description="Acidic residues" evidence="1">
    <location>
        <begin position="185"/>
        <end position="198"/>
    </location>
</feature>
<feature type="compositionally biased region" description="Acidic residues" evidence="1">
    <location>
        <begin position="252"/>
        <end position="263"/>
    </location>
</feature>
<feature type="compositionally biased region" description="Acidic residues" evidence="1">
    <location>
        <begin position="294"/>
        <end position="308"/>
    </location>
</feature>
<feature type="compositionally biased region" description="Polar residues" evidence="1">
    <location>
        <begin position="328"/>
        <end position="343"/>
    </location>
</feature>
<feature type="compositionally biased region" description="Acidic residues" evidence="1">
    <location>
        <begin position="344"/>
        <end position="354"/>
    </location>
</feature>
<feature type="compositionally biased region" description="Acidic residues" evidence="1">
    <location>
        <begin position="362"/>
        <end position="374"/>
    </location>
</feature>
<feature type="compositionally biased region" description="Basic and acidic residues" evidence="1">
    <location>
        <begin position="375"/>
        <end position="384"/>
    </location>
</feature>
<feature type="compositionally biased region" description="Acidic residues" evidence="1">
    <location>
        <begin position="392"/>
        <end position="404"/>
    </location>
</feature>
<feature type="compositionally biased region" description="Basic residues" evidence="1">
    <location>
        <begin position="534"/>
        <end position="544"/>
    </location>
</feature>
<feature type="compositionally biased region" description="Acidic residues" evidence="1">
    <location>
        <begin position="603"/>
        <end position="622"/>
    </location>
</feature>
<feature type="compositionally biased region" description="Low complexity" evidence="1">
    <location>
        <begin position="626"/>
        <end position="638"/>
    </location>
</feature>
<feature type="compositionally biased region" description="Polar residues" evidence="1">
    <location>
        <begin position="689"/>
        <end position="708"/>
    </location>
</feature>
<name>IFH1_CANAL</name>
<sequence>MGYKNSDNTNNKFSRKSMSPSLTGGKGRKTVGKKVKKTIPRKTVNWSSYDVNSDSNEDSDEESENENDSDNDDEDDDETEHHHLDGLYSLMGKRPHDSSSNGDDDDDDDDDNDNKNIFSSTSSDGDSDEAMFSSSDDDSDVDFVKLQAQQKAHALKIAKARKGLKSKPKNESNDNAIASSSESESNSESDNEDDDDDVVSLKKLKPRKKSFLKYGRRRSDAVLPDINFKFEFDTGENDELEAGNQETHIKEPEEEDIGEEVDYSPENPVDSNNVPSLEFEFDHHLIEVPKINEEELNSDEDYEIDDNELLATLQAENDAEEFLPPITKGNSQPQRNDSLISSTIEEEENDNDNEEASKGGDGDDDDDDDDDENDPFLKEEEKYLVNEFETNGFDENEEDEDEDDLHTFDSDFSTTNRIVNSFKGIGEDRSKPIVKYESSVSGGSDYDEDDYIDLINFDVPLFDDKNGHLDGGKKNSHHKGNTDKLKKDKVKQRANSNHNSDEDDDSYLWNYFFSSDNDSSSEETDDKNNSKTVNKSRKNKKNKKALTNNAITGADELFEQIENDNTFKSKSKSNHHGNSLYKAYSDSPMTIQDLEAEIRAGADDDDDDDDDYDSSESTDVDESLPKSSSNNSLVGSSKKATEVLSSKTADYRPPKLGSWVTVDCKPFGVIDGLSTRTLQLNKSQEPRSAAQSGTSHSTSIVNSSNGSGLGLPTTSIASSLAANPRKSIVVGPTNVPSSMISSDDSALGLDELLNVSELDNDDENDVKIWRDFNNNQNKKKIPLGAFRNKSVLYNNHIYQDDQHHHLHRRNSNADKKFNGSGHIKKQQPIRRQSQSKIERRRASIVEAVSQGYRPTKSGLFSETALADVEELLGDDRDLMELIQGL</sequence>